<sequence>MPKIKTVRGAAKRFKKTASGGFKRKQSHLRHILTKKTTKRKRHLRHKSMVAKADQVLVVACLPYA</sequence>
<organism>
    <name type="scientific">Glaesserella parasuis serovar 5 (strain SH0165)</name>
    <name type="common">Haemophilus parasuis</name>
    <dbReference type="NCBI Taxonomy" id="557723"/>
    <lineage>
        <taxon>Bacteria</taxon>
        <taxon>Pseudomonadati</taxon>
        <taxon>Pseudomonadota</taxon>
        <taxon>Gammaproteobacteria</taxon>
        <taxon>Pasteurellales</taxon>
        <taxon>Pasteurellaceae</taxon>
        <taxon>Glaesserella</taxon>
    </lineage>
</organism>
<feature type="chain" id="PRO_1000194076" description="Large ribosomal subunit protein bL35">
    <location>
        <begin position="1"/>
        <end position="65"/>
    </location>
</feature>
<feature type="region of interest" description="Disordered" evidence="2">
    <location>
        <begin position="1"/>
        <end position="26"/>
    </location>
</feature>
<feature type="compositionally biased region" description="Basic residues" evidence="2">
    <location>
        <begin position="10"/>
        <end position="26"/>
    </location>
</feature>
<dbReference type="EMBL" id="CP001321">
    <property type="protein sequence ID" value="ACL33417.1"/>
    <property type="molecule type" value="Genomic_DNA"/>
</dbReference>
<dbReference type="RefSeq" id="WP_005596065.1">
    <property type="nucleotide sequence ID" value="NC_011852.1"/>
</dbReference>
<dbReference type="SMR" id="B8F7W5"/>
<dbReference type="STRING" id="557723.HAPS_1933"/>
<dbReference type="GeneID" id="93297699"/>
<dbReference type="KEGG" id="hap:HAPS_1933"/>
<dbReference type="HOGENOM" id="CLU_169643_1_1_6"/>
<dbReference type="Proteomes" id="UP000006743">
    <property type="component" value="Chromosome"/>
</dbReference>
<dbReference type="GO" id="GO:0022625">
    <property type="term" value="C:cytosolic large ribosomal subunit"/>
    <property type="evidence" value="ECO:0007669"/>
    <property type="project" value="TreeGrafter"/>
</dbReference>
<dbReference type="GO" id="GO:0003735">
    <property type="term" value="F:structural constituent of ribosome"/>
    <property type="evidence" value="ECO:0007669"/>
    <property type="project" value="InterPro"/>
</dbReference>
<dbReference type="GO" id="GO:0006412">
    <property type="term" value="P:translation"/>
    <property type="evidence" value="ECO:0007669"/>
    <property type="project" value="UniProtKB-UniRule"/>
</dbReference>
<dbReference type="FunFam" id="4.10.410.60:FF:000001">
    <property type="entry name" value="50S ribosomal protein L35"/>
    <property type="match status" value="1"/>
</dbReference>
<dbReference type="Gene3D" id="4.10.410.60">
    <property type="match status" value="1"/>
</dbReference>
<dbReference type="HAMAP" id="MF_00514">
    <property type="entry name" value="Ribosomal_bL35"/>
    <property type="match status" value="1"/>
</dbReference>
<dbReference type="InterPro" id="IPR001706">
    <property type="entry name" value="Ribosomal_bL35"/>
</dbReference>
<dbReference type="InterPro" id="IPR021137">
    <property type="entry name" value="Ribosomal_bL35-like"/>
</dbReference>
<dbReference type="InterPro" id="IPR018265">
    <property type="entry name" value="Ribosomal_bL35_CS"/>
</dbReference>
<dbReference type="InterPro" id="IPR037229">
    <property type="entry name" value="Ribosomal_bL35_sf"/>
</dbReference>
<dbReference type="NCBIfam" id="TIGR00001">
    <property type="entry name" value="rpmI_bact"/>
    <property type="match status" value="1"/>
</dbReference>
<dbReference type="PANTHER" id="PTHR33343">
    <property type="entry name" value="54S RIBOSOMAL PROTEIN BL35M"/>
    <property type="match status" value="1"/>
</dbReference>
<dbReference type="PANTHER" id="PTHR33343:SF1">
    <property type="entry name" value="LARGE RIBOSOMAL SUBUNIT PROTEIN BL35M"/>
    <property type="match status" value="1"/>
</dbReference>
<dbReference type="Pfam" id="PF01632">
    <property type="entry name" value="Ribosomal_L35p"/>
    <property type="match status" value="1"/>
</dbReference>
<dbReference type="PRINTS" id="PR00064">
    <property type="entry name" value="RIBOSOMALL35"/>
</dbReference>
<dbReference type="SUPFAM" id="SSF143034">
    <property type="entry name" value="L35p-like"/>
    <property type="match status" value="1"/>
</dbReference>
<dbReference type="PROSITE" id="PS00936">
    <property type="entry name" value="RIBOSOMAL_L35"/>
    <property type="match status" value="1"/>
</dbReference>
<reference key="1">
    <citation type="journal article" date="2009" name="J. Bacteriol.">
        <title>Complete genome sequence of Haemophilus parasuis SH0165.</title>
        <authorList>
            <person name="Yue M."/>
            <person name="Yang F."/>
            <person name="Yang J."/>
            <person name="Bei W."/>
            <person name="Cai X."/>
            <person name="Chen L."/>
            <person name="Dong J."/>
            <person name="Zhou R."/>
            <person name="Jin M."/>
            <person name="Jin Q."/>
            <person name="Chen H."/>
        </authorList>
    </citation>
    <scope>NUCLEOTIDE SEQUENCE [LARGE SCALE GENOMIC DNA]</scope>
    <source>
        <strain>SH0165</strain>
    </source>
</reference>
<evidence type="ECO:0000255" key="1">
    <source>
        <dbReference type="HAMAP-Rule" id="MF_00514"/>
    </source>
</evidence>
<evidence type="ECO:0000256" key="2">
    <source>
        <dbReference type="SAM" id="MobiDB-lite"/>
    </source>
</evidence>
<evidence type="ECO:0000305" key="3"/>
<proteinExistence type="inferred from homology"/>
<keyword id="KW-1185">Reference proteome</keyword>
<keyword id="KW-0687">Ribonucleoprotein</keyword>
<keyword id="KW-0689">Ribosomal protein</keyword>
<comment type="similarity">
    <text evidence="1">Belongs to the bacterial ribosomal protein bL35 family.</text>
</comment>
<gene>
    <name evidence="1" type="primary">rpmI</name>
    <name type="ordered locus">HAPS_1933</name>
</gene>
<protein>
    <recommendedName>
        <fullName evidence="1">Large ribosomal subunit protein bL35</fullName>
    </recommendedName>
    <alternativeName>
        <fullName evidence="3">50S ribosomal protein L35</fullName>
    </alternativeName>
</protein>
<name>RL35_GLAP5</name>
<accession>B8F7W5</accession>